<gene>
    <name type="primary">ihfB</name>
    <name type="synonym">himD</name>
    <name type="synonym">virN</name>
</gene>
<name>IHFB_AGRT9</name>
<evidence type="ECO:0000250" key="1"/>
<evidence type="ECO:0000305" key="2"/>
<reference key="1">
    <citation type="journal article" date="2000" name="J. Exp. Bot.">
        <title>Sequence analysis of the vir-region from Agrobacterium tumefaciens octopine Ti plasmid pTi15955.</title>
        <authorList>
            <person name="Schrammeijer B."/>
            <person name="Beijersbergen A."/>
            <person name="Idler K.B."/>
            <person name="Melchers L.S."/>
            <person name="Thompson D.V."/>
            <person name="Hooykaas P.J.J."/>
        </authorList>
    </citation>
    <scope>NUCLEOTIDE SEQUENCE [GENOMIC DNA]</scope>
</reference>
<organism>
    <name type="scientific">Agrobacterium tumefaciens (strain 15955)</name>
    <dbReference type="NCBI Taxonomy" id="190386"/>
    <lineage>
        <taxon>Bacteria</taxon>
        <taxon>Pseudomonadati</taxon>
        <taxon>Pseudomonadota</taxon>
        <taxon>Alphaproteobacteria</taxon>
        <taxon>Hyphomicrobiales</taxon>
        <taxon>Rhizobiaceae</taxon>
        <taxon>Rhizobium/Agrobacterium group</taxon>
        <taxon>Agrobacterium</taxon>
        <taxon>Agrobacterium tumefaciens complex</taxon>
    </lineage>
</organism>
<proteinExistence type="inferred from homology"/>
<comment type="function">
    <text evidence="1">This protein is one of the two subunits of integration host factor, a specific DNA-binding protein that functions in genetic recombination as well as in transcriptional and translational control.</text>
</comment>
<comment type="subunit">
    <text evidence="1">Heterodimer of an alpha and a beta chain.</text>
</comment>
<comment type="similarity">
    <text evidence="2">Belongs to the bacterial histone-like protein family.</text>
</comment>
<keyword id="KW-0233">DNA recombination</keyword>
<keyword id="KW-0238">DNA-binding</keyword>
<keyword id="KW-0614">Plasmid</keyword>
<keyword id="KW-0804">Transcription</keyword>
<keyword id="KW-0805">Transcription regulation</keyword>
<keyword id="KW-0810">Translation regulation</keyword>
<sequence>MIKSELVDFVAAKNPYLHRRDAENAVDAVLDEITGALERGERVDIRSFGTFVVRHRPARSGRNPLNGNAVFIEEKWVPFFRAGKEIRDRLNTAEKSQGRGNL</sequence>
<accession>P0A3I2</accession>
<accession>O52514</accession>
<protein>
    <recommendedName>
        <fullName>Integration host factor subunit beta</fullName>
        <shortName>IHF-beta</shortName>
    </recommendedName>
</protein>
<geneLocation type="plasmid">
    <name>pTi15955</name>
</geneLocation>
<dbReference type="EMBL" id="X06826">
    <property type="protein sequence ID" value="CAC15177.1"/>
    <property type="molecule type" value="Genomic_DNA"/>
</dbReference>
<dbReference type="RefSeq" id="NP_059821.1">
    <property type="nucleotide sequence ID" value="NC_002377.1"/>
</dbReference>
<dbReference type="SMR" id="P0A3I2"/>
<dbReference type="GO" id="GO:0005694">
    <property type="term" value="C:chromosome"/>
    <property type="evidence" value="ECO:0007669"/>
    <property type="project" value="InterPro"/>
</dbReference>
<dbReference type="GO" id="GO:0005829">
    <property type="term" value="C:cytosol"/>
    <property type="evidence" value="ECO:0007669"/>
    <property type="project" value="TreeGrafter"/>
</dbReference>
<dbReference type="GO" id="GO:0003677">
    <property type="term" value="F:DNA binding"/>
    <property type="evidence" value="ECO:0007669"/>
    <property type="project" value="UniProtKB-UniRule"/>
</dbReference>
<dbReference type="GO" id="GO:0030527">
    <property type="term" value="F:structural constituent of chromatin"/>
    <property type="evidence" value="ECO:0007669"/>
    <property type="project" value="InterPro"/>
</dbReference>
<dbReference type="GO" id="GO:0006310">
    <property type="term" value="P:DNA recombination"/>
    <property type="evidence" value="ECO:0007669"/>
    <property type="project" value="UniProtKB-UniRule"/>
</dbReference>
<dbReference type="GO" id="GO:0006355">
    <property type="term" value="P:regulation of DNA-templated transcription"/>
    <property type="evidence" value="ECO:0007669"/>
    <property type="project" value="UniProtKB-UniRule"/>
</dbReference>
<dbReference type="GO" id="GO:0006417">
    <property type="term" value="P:regulation of translation"/>
    <property type="evidence" value="ECO:0007669"/>
    <property type="project" value="UniProtKB-UniRule"/>
</dbReference>
<dbReference type="CDD" id="cd13836">
    <property type="entry name" value="IHF_B"/>
    <property type="match status" value="1"/>
</dbReference>
<dbReference type="Gene3D" id="4.10.520.10">
    <property type="entry name" value="IHF-like DNA-binding proteins"/>
    <property type="match status" value="1"/>
</dbReference>
<dbReference type="HAMAP" id="MF_00381">
    <property type="entry name" value="IHF_beta"/>
    <property type="match status" value="1"/>
</dbReference>
<dbReference type="InterPro" id="IPR000119">
    <property type="entry name" value="Hist_DNA-bd"/>
</dbReference>
<dbReference type="InterPro" id="IPR020816">
    <property type="entry name" value="Histone-like_DNA-bd_CS"/>
</dbReference>
<dbReference type="InterPro" id="IPR010992">
    <property type="entry name" value="IHF-like_DNA-bd_dom_sf"/>
</dbReference>
<dbReference type="InterPro" id="IPR005685">
    <property type="entry name" value="IHF_beta"/>
</dbReference>
<dbReference type="NCBIfam" id="NF001222">
    <property type="entry name" value="PRK00199.1"/>
    <property type="match status" value="1"/>
</dbReference>
<dbReference type="PANTHER" id="PTHR33175">
    <property type="entry name" value="DNA-BINDING PROTEIN HU"/>
    <property type="match status" value="1"/>
</dbReference>
<dbReference type="PANTHER" id="PTHR33175:SF5">
    <property type="entry name" value="INTEGRATION HOST FACTOR SUBUNIT BETA"/>
    <property type="match status" value="1"/>
</dbReference>
<dbReference type="Pfam" id="PF00216">
    <property type="entry name" value="Bac_DNA_binding"/>
    <property type="match status" value="1"/>
</dbReference>
<dbReference type="PRINTS" id="PR01727">
    <property type="entry name" value="DNABINDINGHU"/>
</dbReference>
<dbReference type="SMART" id="SM00411">
    <property type="entry name" value="BHL"/>
    <property type="match status" value="1"/>
</dbReference>
<dbReference type="SUPFAM" id="SSF47729">
    <property type="entry name" value="IHF-like DNA-binding proteins"/>
    <property type="match status" value="1"/>
</dbReference>
<dbReference type="PROSITE" id="PS00045">
    <property type="entry name" value="HISTONE_LIKE"/>
    <property type="match status" value="1"/>
</dbReference>
<feature type="chain" id="PRO_0000105042" description="Integration host factor subunit beta">
    <location>
        <begin position="1"/>
        <end position="102"/>
    </location>
</feature>